<gene>
    <name evidence="1" type="primary">murD</name>
    <name type="ordered locus">CJE0482</name>
</gene>
<name>MURD_CAMJR</name>
<proteinExistence type="inferred from homology"/>
<sequence>MKISLFGYGKTTRAIAENLVDKFGSFDIYDDHFVETKKDTLGNLLLNPNDFDNNLSDIEIPSPGFPPKHKLIQKAKNLQSEYDFFYDIMPKSVWISGTNGKTTTTQMATHLLSHIGAVMGGNVGTPLAELNPYEKLWILETSSFTLHYTHKAKPEIYALLPISPDHLSWHGSFDNYVQDKLSVLKRMNECDVTILPKIYANTPTKAHIISYKDEKDLAAKFSIDMEKISFKSPFLLDAIMALAIEKILLDTLSYELLNSFVMEKNKLEEIKDSQNRLWVNDTKATNESAVMAALNRYKDKKIHLIIGGDDKGVDLSNLFDFMKGFDIELYAIGISTEKMLDYAKKANLKAYKCEVLSKAVNEISNHLRVNEVALLSPACASLDQFNSYAERGKVFKECVNKI</sequence>
<accession>Q5HW34</accession>
<organism>
    <name type="scientific">Campylobacter jejuni (strain RM1221)</name>
    <dbReference type="NCBI Taxonomy" id="195099"/>
    <lineage>
        <taxon>Bacteria</taxon>
        <taxon>Pseudomonadati</taxon>
        <taxon>Campylobacterota</taxon>
        <taxon>Epsilonproteobacteria</taxon>
        <taxon>Campylobacterales</taxon>
        <taxon>Campylobacteraceae</taxon>
        <taxon>Campylobacter</taxon>
    </lineage>
</organism>
<dbReference type="EC" id="6.3.2.9" evidence="1"/>
<dbReference type="EMBL" id="CP000025">
    <property type="protein sequence ID" value="AAW35070.1"/>
    <property type="molecule type" value="Genomic_DNA"/>
</dbReference>
<dbReference type="RefSeq" id="WP_011049677.1">
    <property type="nucleotide sequence ID" value="NC_003912.7"/>
</dbReference>
<dbReference type="SMR" id="Q5HW34"/>
<dbReference type="KEGG" id="cjr:CJE0482"/>
<dbReference type="HOGENOM" id="CLU_032540_2_0_7"/>
<dbReference type="UniPathway" id="UPA00219"/>
<dbReference type="GO" id="GO:0005737">
    <property type="term" value="C:cytoplasm"/>
    <property type="evidence" value="ECO:0007669"/>
    <property type="project" value="UniProtKB-SubCell"/>
</dbReference>
<dbReference type="GO" id="GO:0005524">
    <property type="term" value="F:ATP binding"/>
    <property type="evidence" value="ECO:0007669"/>
    <property type="project" value="UniProtKB-UniRule"/>
</dbReference>
<dbReference type="GO" id="GO:0008764">
    <property type="term" value="F:UDP-N-acetylmuramoylalanine-D-glutamate ligase activity"/>
    <property type="evidence" value="ECO:0007669"/>
    <property type="project" value="UniProtKB-UniRule"/>
</dbReference>
<dbReference type="GO" id="GO:0051301">
    <property type="term" value="P:cell division"/>
    <property type="evidence" value="ECO:0007669"/>
    <property type="project" value="UniProtKB-KW"/>
</dbReference>
<dbReference type="GO" id="GO:0071555">
    <property type="term" value="P:cell wall organization"/>
    <property type="evidence" value="ECO:0007669"/>
    <property type="project" value="UniProtKB-KW"/>
</dbReference>
<dbReference type="GO" id="GO:0009252">
    <property type="term" value="P:peptidoglycan biosynthetic process"/>
    <property type="evidence" value="ECO:0007669"/>
    <property type="project" value="UniProtKB-UniRule"/>
</dbReference>
<dbReference type="GO" id="GO:0008360">
    <property type="term" value="P:regulation of cell shape"/>
    <property type="evidence" value="ECO:0007669"/>
    <property type="project" value="UniProtKB-KW"/>
</dbReference>
<dbReference type="Gene3D" id="3.90.190.20">
    <property type="entry name" value="Mur ligase, C-terminal domain"/>
    <property type="match status" value="1"/>
</dbReference>
<dbReference type="Gene3D" id="3.40.1190.10">
    <property type="entry name" value="Mur-like, catalytic domain"/>
    <property type="match status" value="1"/>
</dbReference>
<dbReference type="HAMAP" id="MF_00639">
    <property type="entry name" value="MurD"/>
    <property type="match status" value="1"/>
</dbReference>
<dbReference type="InterPro" id="IPR036565">
    <property type="entry name" value="Mur-like_cat_sf"/>
</dbReference>
<dbReference type="InterPro" id="IPR036615">
    <property type="entry name" value="Mur_ligase_C_dom_sf"/>
</dbReference>
<dbReference type="InterPro" id="IPR013221">
    <property type="entry name" value="Mur_ligase_cen"/>
</dbReference>
<dbReference type="InterPro" id="IPR005762">
    <property type="entry name" value="MurD"/>
</dbReference>
<dbReference type="NCBIfam" id="TIGR01087">
    <property type="entry name" value="murD"/>
    <property type="match status" value="1"/>
</dbReference>
<dbReference type="PANTHER" id="PTHR43692">
    <property type="entry name" value="UDP-N-ACETYLMURAMOYLALANINE--D-GLUTAMATE LIGASE"/>
    <property type="match status" value="1"/>
</dbReference>
<dbReference type="PANTHER" id="PTHR43692:SF1">
    <property type="entry name" value="UDP-N-ACETYLMURAMOYLALANINE--D-GLUTAMATE LIGASE"/>
    <property type="match status" value="1"/>
</dbReference>
<dbReference type="Pfam" id="PF08245">
    <property type="entry name" value="Mur_ligase_M"/>
    <property type="match status" value="1"/>
</dbReference>
<dbReference type="SUPFAM" id="SSF53623">
    <property type="entry name" value="MurD-like peptide ligases, catalytic domain"/>
    <property type="match status" value="1"/>
</dbReference>
<dbReference type="SUPFAM" id="SSF53244">
    <property type="entry name" value="MurD-like peptide ligases, peptide-binding domain"/>
    <property type="match status" value="1"/>
</dbReference>
<feature type="chain" id="PRO_0000108990" description="UDP-N-acetylmuramoylalanine--D-glutamate ligase">
    <location>
        <begin position="1"/>
        <end position="402"/>
    </location>
</feature>
<feature type="binding site" evidence="1">
    <location>
        <begin position="97"/>
        <end position="103"/>
    </location>
    <ligand>
        <name>ATP</name>
        <dbReference type="ChEBI" id="CHEBI:30616"/>
    </ligand>
</feature>
<comment type="function">
    <text evidence="1">Cell wall formation. Catalyzes the addition of glutamate to the nucleotide precursor UDP-N-acetylmuramoyl-L-alanine (UMA).</text>
</comment>
<comment type="catalytic activity">
    <reaction evidence="1">
        <text>UDP-N-acetyl-alpha-D-muramoyl-L-alanine + D-glutamate + ATP = UDP-N-acetyl-alpha-D-muramoyl-L-alanyl-D-glutamate + ADP + phosphate + H(+)</text>
        <dbReference type="Rhea" id="RHEA:16429"/>
        <dbReference type="ChEBI" id="CHEBI:15378"/>
        <dbReference type="ChEBI" id="CHEBI:29986"/>
        <dbReference type="ChEBI" id="CHEBI:30616"/>
        <dbReference type="ChEBI" id="CHEBI:43474"/>
        <dbReference type="ChEBI" id="CHEBI:83898"/>
        <dbReference type="ChEBI" id="CHEBI:83900"/>
        <dbReference type="ChEBI" id="CHEBI:456216"/>
        <dbReference type="EC" id="6.3.2.9"/>
    </reaction>
</comment>
<comment type="pathway">
    <text evidence="1">Cell wall biogenesis; peptidoglycan biosynthesis.</text>
</comment>
<comment type="subcellular location">
    <subcellularLocation>
        <location evidence="1">Cytoplasm</location>
    </subcellularLocation>
</comment>
<comment type="similarity">
    <text evidence="1">Belongs to the MurCDEF family.</text>
</comment>
<protein>
    <recommendedName>
        <fullName evidence="1">UDP-N-acetylmuramoylalanine--D-glutamate ligase</fullName>
        <ecNumber evidence="1">6.3.2.9</ecNumber>
    </recommendedName>
    <alternativeName>
        <fullName evidence="1">D-glutamic acid-adding enzyme</fullName>
    </alternativeName>
    <alternativeName>
        <fullName evidence="1">UDP-N-acetylmuramoyl-L-alanyl-D-glutamate synthetase</fullName>
    </alternativeName>
</protein>
<keyword id="KW-0067">ATP-binding</keyword>
<keyword id="KW-0131">Cell cycle</keyword>
<keyword id="KW-0132">Cell division</keyword>
<keyword id="KW-0133">Cell shape</keyword>
<keyword id="KW-0961">Cell wall biogenesis/degradation</keyword>
<keyword id="KW-0963">Cytoplasm</keyword>
<keyword id="KW-0436">Ligase</keyword>
<keyword id="KW-0547">Nucleotide-binding</keyword>
<keyword id="KW-0573">Peptidoglycan synthesis</keyword>
<reference key="1">
    <citation type="journal article" date="2005" name="PLoS Biol.">
        <title>Major structural differences and novel potential virulence mechanisms from the genomes of multiple Campylobacter species.</title>
        <authorList>
            <person name="Fouts D.E."/>
            <person name="Mongodin E.F."/>
            <person name="Mandrell R.E."/>
            <person name="Miller W.G."/>
            <person name="Rasko D.A."/>
            <person name="Ravel J."/>
            <person name="Brinkac L.M."/>
            <person name="DeBoy R.T."/>
            <person name="Parker C.T."/>
            <person name="Daugherty S.C."/>
            <person name="Dodson R.J."/>
            <person name="Durkin A.S."/>
            <person name="Madupu R."/>
            <person name="Sullivan S.A."/>
            <person name="Shetty J.U."/>
            <person name="Ayodeji M.A."/>
            <person name="Shvartsbeyn A."/>
            <person name="Schatz M.C."/>
            <person name="Badger J.H."/>
            <person name="Fraser C.M."/>
            <person name="Nelson K.E."/>
        </authorList>
    </citation>
    <scope>NUCLEOTIDE SEQUENCE [LARGE SCALE GENOMIC DNA]</scope>
    <source>
        <strain>RM1221</strain>
    </source>
</reference>
<evidence type="ECO:0000255" key="1">
    <source>
        <dbReference type="HAMAP-Rule" id="MF_00639"/>
    </source>
</evidence>